<comment type="function">
    <text evidence="1">Probably catalyzes the hydrolysis of L-ascorbate-6-P into 3-keto-L-gulonate-6-P. Is essential for L-ascorbate utilization under anaerobic conditions.</text>
</comment>
<comment type="catalytic activity">
    <reaction evidence="1">
        <text>L-ascorbate 6-phosphate + H2O = 3-dehydro-L-gulonate 6-phosphate</text>
        <dbReference type="Rhea" id="RHEA:28803"/>
        <dbReference type="ChEBI" id="CHEBI:15377"/>
        <dbReference type="ChEBI" id="CHEBI:58774"/>
        <dbReference type="ChEBI" id="CHEBI:61698"/>
    </reaction>
</comment>
<comment type="cofactor">
    <cofactor evidence="1">
        <name>a divalent metal cation</name>
        <dbReference type="ChEBI" id="CHEBI:60240"/>
    </cofactor>
</comment>
<comment type="pathway">
    <text evidence="1">Cofactor degradation; L-ascorbate degradation; D-xylulose 5-phosphate from L-ascorbate: step 1/4.</text>
</comment>
<comment type="subcellular location">
    <subcellularLocation>
        <location evidence="1">Cytoplasm</location>
    </subcellularLocation>
</comment>
<comment type="induction">
    <text evidence="1">Induced by L-ascorbate. Repressed by UlaR.</text>
</comment>
<comment type="similarity">
    <text evidence="1">Belongs to the UlaG family.</text>
</comment>
<protein>
    <recommendedName>
        <fullName evidence="1">Probable L-ascorbate-6-phosphate lactonase UlaG</fullName>
        <ecNumber evidence="1">3.1.1.-</ecNumber>
    </recommendedName>
    <alternativeName>
        <fullName evidence="1">L-ascorbate utilization protein G</fullName>
    </alternativeName>
</protein>
<name>ULAG_ESCF3</name>
<accession>B7LLX4</accession>
<sequence length="354" mass="40072">MSKVKSITRESWILSTFPEWGSWLNEEIEQEQVAPGTFAMWWLGCTGIWLKSEGGTNVCVDFWCGTGKQSHGNPLMKAGHQMQRMAGVKKLQPNLRTTPFVLDPFAIRQIDAVLATHDHNDHIDVNVAAAVMQNCADDVPFIGPKTCVDLWIGWGVPKERCIVVKPGDVVKVKDIEIHALDAFDRTALITLPAEQKAAGVLPDGMDERAVNYLFKTPGGTLYHSGDSHYSNYYAKHGNEHQIDVALGSYGENPRGITDKMTSADILRMAEALNTKVVIPFHHDIWSNFQADPQEIRVLWEMKKDRLKYGFKPFIWQVGGKFTWPLDKDNFEYHYPRGFDDCFTIEPDLPFKSFL</sequence>
<organism>
    <name type="scientific">Escherichia fergusonii (strain ATCC 35469 / DSM 13698 / CCUG 18766 / IAM 14443 / JCM 21226 / LMG 7866 / NBRC 102419 / NCTC 12128 / CDC 0568-73)</name>
    <dbReference type="NCBI Taxonomy" id="585054"/>
    <lineage>
        <taxon>Bacteria</taxon>
        <taxon>Pseudomonadati</taxon>
        <taxon>Pseudomonadota</taxon>
        <taxon>Gammaproteobacteria</taxon>
        <taxon>Enterobacterales</taxon>
        <taxon>Enterobacteriaceae</taxon>
        <taxon>Escherichia</taxon>
    </lineage>
</organism>
<keyword id="KW-0963">Cytoplasm</keyword>
<keyword id="KW-0378">Hydrolase</keyword>
<dbReference type="EC" id="3.1.1.-" evidence="1"/>
<dbReference type="EMBL" id="CU928158">
    <property type="protein sequence ID" value="CAQ91664.1"/>
    <property type="molecule type" value="Genomic_DNA"/>
</dbReference>
<dbReference type="RefSeq" id="WP_002431733.1">
    <property type="nucleotide sequence ID" value="NC_011740.1"/>
</dbReference>
<dbReference type="SMR" id="B7LLX4"/>
<dbReference type="GeneID" id="75059167"/>
<dbReference type="KEGG" id="efe:EFER_4245"/>
<dbReference type="HOGENOM" id="CLU_074775_0_0_6"/>
<dbReference type="OrthoDB" id="9800061at2"/>
<dbReference type="UniPathway" id="UPA00263">
    <property type="reaction ID" value="UER00377"/>
</dbReference>
<dbReference type="Proteomes" id="UP000000745">
    <property type="component" value="Chromosome"/>
</dbReference>
<dbReference type="GO" id="GO:0005737">
    <property type="term" value="C:cytoplasm"/>
    <property type="evidence" value="ECO:0007669"/>
    <property type="project" value="UniProtKB-SubCell"/>
</dbReference>
<dbReference type="GO" id="GO:0035460">
    <property type="term" value="F:L-ascorbate 6-phosphate lactonase activity"/>
    <property type="evidence" value="ECO:0007669"/>
    <property type="project" value="InterPro"/>
</dbReference>
<dbReference type="GO" id="GO:0030145">
    <property type="term" value="F:manganese ion binding"/>
    <property type="evidence" value="ECO:0007669"/>
    <property type="project" value="InterPro"/>
</dbReference>
<dbReference type="GO" id="GO:0019854">
    <property type="term" value="P:L-ascorbic acid catabolic process"/>
    <property type="evidence" value="ECO:0007669"/>
    <property type="project" value="UniProtKB-UniRule"/>
</dbReference>
<dbReference type="CDD" id="cd16284">
    <property type="entry name" value="UlaG-like_MBL-fold"/>
    <property type="match status" value="1"/>
</dbReference>
<dbReference type="FunFam" id="3.60.15.10:FF:000004">
    <property type="entry name" value="Probable L-ascorbate-6-phosphate lactonase UlaG"/>
    <property type="match status" value="1"/>
</dbReference>
<dbReference type="Gene3D" id="3.60.15.10">
    <property type="entry name" value="Ribonuclease Z/Hydroxyacylglutathione hydrolase-like"/>
    <property type="match status" value="1"/>
</dbReference>
<dbReference type="HAMAP" id="MF_01266">
    <property type="entry name" value="UlaG"/>
    <property type="match status" value="1"/>
</dbReference>
<dbReference type="InterPro" id="IPR023951">
    <property type="entry name" value="L-ascorbate_6P_UlaG"/>
</dbReference>
<dbReference type="InterPro" id="IPR001279">
    <property type="entry name" value="Metallo-B-lactamas"/>
</dbReference>
<dbReference type="InterPro" id="IPR036866">
    <property type="entry name" value="RibonucZ/Hydroxyglut_hydro"/>
</dbReference>
<dbReference type="InterPro" id="IPR048021">
    <property type="entry name" value="UlaG-like_MBL-fold"/>
</dbReference>
<dbReference type="InterPro" id="IPR050114">
    <property type="entry name" value="UPF0173_UPF0282_UlaG_hydrolase"/>
</dbReference>
<dbReference type="NCBIfam" id="NF008688">
    <property type="entry name" value="PRK11709.1"/>
    <property type="match status" value="1"/>
</dbReference>
<dbReference type="PANTHER" id="PTHR43546:SF9">
    <property type="entry name" value="L-ASCORBATE-6-PHOSPHATE LACTONASE ULAG-RELATED"/>
    <property type="match status" value="1"/>
</dbReference>
<dbReference type="PANTHER" id="PTHR43546">
    <property type="entry name" value="UPF0173 METAL-DEPENDENT HYDROLASE MJ1163-RELATED"/>
    <property type="match status" value="1"/>
</dbReference>
<dbReference type="Pfam" id="PF12706">
    <property type="entry name" value="Lactamase_B_2"/>
    <property type="match status" value="1"/>
</dbReference>
<dbReference type="SUPFAM" id="SSF56281">
    <property type="entry name" value="Metallo-hydrolase/oxidoreductase"/>
    <property type="match status" value="1"/>
</dbReference>
<evidence type="ECO:0000255" key="1">
    <source>
        <dbReference type="HAMAP-Rule" id="MF_01266"/>
    </source>
</evidence>
<feature type="chain" id="PRO_1000140099" description="Probable L-ascorbate-6-phosphate lactonase UlaG">
    <location>
        <begin position="1"/>
        <end position="354"/>
    </location>
</feature>
<gene>
    <name evidence="1" type="primary">ulaG</name>
    <name type="ordered locus">EFER_4245</name>
</gene>
<proteinExistence type="inferred from homology"/>
<reference key="1">
    <citation type="journal article" date="2009" name="PLoS Genet.">
        <title>Organised genome dynamics in the Escherichia coli species results in highly diverse adaptive paths.</title>
        <authorList>
            <person name="Touchon M."/>
            <person name="Hoede C."/>
            <person name="Tenaillon O."/>
            <person name="Barbe V."/>
            <person name="Baeriswyl S."/>
            <person name="Bidet P."/>
            <person name="Bingen E."/>
            <person name="Bonacorsi S."/>
            <person name="Bouchier C."/>
            <person name="Bouvet O."/>
            <person name="Calteau A."/>
            <person name="Chiapello H."/>
            <person name="Clermont O."/>
            <person name="Cruveiller S."/>
            <person name="Danchin A."/>
            <person name="Diard M."/>
            <person name="Dossat C."/>
            <person name="Karoui M.E."/>
            <person name="Frapy E."/>
            <person name="Garry L."/>
            <person name="Ghigo J.M."/>
            <person name="Gilles A.M."/>
            <person name="Johnson J."/>
            <person name="Le Bouguenec C."/>
            <person name="Lescat M."/>
            <person name="Mangenot S."/>
            <person name="Martinez-Jehanne V."/>
            <person name="Matic I."/>
            <person name="Nassif X."/>
            <person name="Oztas S."/>
            <person name="Petit M.A."/>
            <person name="Pichon C."/>
            <person name="Rouy Z."/>
            <person name="Ruf C.S."/>
            <person name="Schneider D."/>
            <person name="Tourret J."/>
            <person name="Vacherie B."/>
            <person name="Vallenet D."/>
            <person name="Medigue C."/>
            <person name="Rocha E.P.C."/>
            <person name="Denamur E."/>
        </authorList>
    </citation>
    <scope>NUCLEOTIDE SEQUENCE [LARGE SCALE GENOMIC DNA]</scope>
    <source>
        <strain>ATCC 35469 / DSM 13698 / BCRC 15582 / CCUG 18766 / IAM 14443 / JCM 21226 / LMG 7866 / NBRC 102419 / NCTC 12128 / CDC 0568-73</strain>
    </source>
</reference>